<protein>
    <recommendedName>
        <fullName evidence="1">tRNA dimethylallyltransferase</fullName>
        <ecNumber evidence="1">2.5.1.75</ecNumber>
    </recommendedName>
    <alternativeName>
        <fullName evidence="1">Dimethylallyl diphosphate:tRNA dimethylallyltransferase</fullName>
        <shortName evidence="1">DMAPP:tRNA dimethylallyltransferase</shortName>
        <shortName evidence="1">DMATase</shortName>
    </alternativeName>
    <alternativeName>
        <fullName evidence="1">Isopentenyl-diphosphate:tRNA isopentenyltransferase</fullName>
        <shortName evidence="1">IPP transferase</shortName>
        <shortName evidence="1">IPPT</shortName>
        <shortName evidence="1">IPTase</shortName>
    </alternativeName>
</protein>
<sequence length="317" mass="36666">MGEVQREKVAVIIGPTAVGKTKLSIDLAKALNGEIISGDSMQIYRTMDIGTAKVTKEEMDGIPHYMVDIKNPEESFSVAEFQERVRKHIREITERGKLPIIVGGTGLYIQSVLFDYQFTDDAGDAIYREQMEKLALERGVEYVHKKLQEVDPESAERIHANNVRRVIRALEIFHTTGEKMSDQLEKQENELLYDVSLIGLTMDREMLYDRINLRVDIMMDQGLLEEVEGLYNRGIRDCQSIQAIGYKEIYDYFEDRVSLEEAVSQLKTNSRRYAKRQLTWFRNKMDVTWFDVTDGEKTSEILRYIEGKLQLKSNNSK</sequence>
<dbReference type="EC" id="2.5.1.75" evidence="1"/>
<dbReference type="EMBL" id="CP000227">
    <property type="protein sequence ID" value="ACM13937.1"/>
    <property type="molecule type" value="Genomic_DNA"/>
</dbReference>
<dbReference type="SMR" id="B9IUM7"/>
<dbReference type="KEGG" id="bcq:BCQ_3509"/>
<dbReference type="HOGENOM" id="CLU_032616_0_1_9"/>
<dbReference type="Proteomes" id="UP000000441">
    <property type="component" value="Chromosome"/>
</dbReference>
<dbReference type="GO" id="GO:0005524">
    <property type="term" value="F:ATP binding"/>
    <property type="evidence" value="ECO:0007669"/>
    <property type="project" value="UniProtKB-UniRule"/>
</dbReference>
<dbReference type="GO" id="GO:0052381">
    <property type="term" value="F:tRNA dimethylallyltransferase activity"/>
    <property type="evidence" value="ECO:0007669"/>
    <property type="project" value="UniProtKB-UniRule"/>
</dbReference>
<dbReference type="GO" id="GO:0006400">
    <property type="term" value="P:tRNA modification"/>
    <property type="evidence" value="ECO:0007669"/>
    <property type="project" value="TreeGrafter"/>
</dbReference>
<dbReference type="FunFam" id="1.10.20.140:FF:000001">
    <property type="entry name" value="tRNA dimethylallyltransferase"/>
    <property type="match status" value="1"/>
</dbReference>
<dbReference type="Gene3D" id="1.10.20.140">
    <property type="match status" value="1"/>
</dbReference>
<dbReference type="Gene3D" id="3.40.50.300">
    <property type="entry name" value="P-loop containing nucleotide triphosphate hydrolases"/>
    <property type="match status" value="1"/>
</dbReference>
<dbReference type="HAMAP" id="MF_00185">
    <property type="entry name" value="IPP_trans"/>
    <property type="match status" value="1"/>
</dbReference>
<dbReference type="InterPro" id="IPR039657">
    <property type="entry name" value="Dimethylallyltransferase"/>
</dbReference>
<dbReference type="InterPro" id="IPR018022">
    <property type="entry name" value="IPT"/>
</dbReference>
<dbReference type="InterPro" id="IPR027417">
    <property type="entry name" value="P-loop_NTPase"/>
</dbReference>
<dbReference type="NCBIfam" id="TIGR00174">
    <property type="entry name" value="miaA"/>
    <property type="match status" value="1"/>
</dbReference>
<dbReference type="PANTHER" id="PTHR11088">
    <property type="entry name" value="TRNA DIMETHYLALLYLTRANSFERASE"/>
    <property type="match status" value="1"/>
</dbReference>
<dbReference type="PANTHER" id="PTHR11088:SF60">
    <property type="entry name" value="TRNA DIMETHYLALLYLTRANSFERASE"/>
    <property type="match status" value="1"/>
</dbReference>
<dbReference type="Pfam" id="PF01715">
    <property type="entry name" value="IPPT"/>
    <property type="match status" value="1"/>
</dbReference>
<dbReference type="SUPFAM" id="SSF52540">
    <property type="entry name" value="P-loop containing nucleoside triphosphate hydrolases"/>
    <property type="match status" value="2"/>
</dbReference>
<name>MIAA_BACCQ</name>
<gene>
    <name evidence="1" type="primary">miaA</name>
    <name type="ordered locus">BCQ_3509</name>
</gene>
<evidence type="ECO:0000255" key="1">
    <source>
        <dbReference type="HAMAP-Rule" id="MF_00185"/>
    </source>
</evidence>
<accession>B9IUM7</accession>
<keyword id="KW-0067">ATP-binding</keyword>
<keyword id="KW-0460">Magnesium</keyword>
<keyword id="KW-0547">Nucleotide-binding</keyword>
<keyword id="KW-0808">Transferase</keyword>
<keyword id="KW-0819">tRNA processing</keyword>
<comment type="function">
    <text evidence="1">Catalyzes the transfer of a dimethylallyl group onto the adenine at position 37 in tRNAs that read codons beginning with uridine, leading to the formation of N6-(dimethylallyl)adenosine (i(6)A).</text>
</comment>
<comment type="catalytic activity">
    <reaction evidence="1">
        <text>adenosine(37) in tRNA + dimethylallyl diphosphate = N(6)-dimethylallyladenosine(37) in tRNA + diphosphate</text>
        <dbReference type="Rhea" id="RHEA:26482"/>
        <dbReference type="Rhea" id="RHEA-COMP:10162"/>
        <dbReference type="Rhea" id="RHEA-COMP:10375"/>
        <dbReference type="ChEBI" id="CHEBI:33019"/>
        <dbReference type="ChEBI" id="CHEBI:57623"/>
        <dbReference type="ChEBI" id="CHEBI:74411"/>
        <dbReference type="ChEBI" id="CHEBI:74415"/>
        <dbReference type="EC" id="2.5.1.75"/>
    </reaction>
</comment>
<comment type="cofactor">
    <cofactor evidence="1">
        <name>Mg(2+)</name>
        <dbReference type="ChEBI" id="CHEBI:18420"/>
    </cofactor>
</comment>
<comment type="subunit">
    <text evidence="1">Monomer.</text>
</comment>
<comment type="similarity">
    <text evidence="1">Belongs to the IPP transferase family.</text>
</comment>
<reference key="1">
    <citation type="journal article" date="2009" name="J. Bacteriol.">
        <title>Complete genome sequence of the extremophilic Bacillus cereus strain Q1 with industrial applications.</title>
        <authorList>
            <person name="Xiong Z."/>
            <person name="Jiang Y."/>
            <person name="Qi D."/>
            <person name="Lu H."/>
            <person name="Yang F."/>
            <person name="Yang J."/>
            <person name="Chen L."/>
            <person name="Sun L."/>
            <person name="Xu X."/>
            <person name="Xue Y."/>
            <person name="Zhu Y."/>
            <person name="Jin Q."/>
        </authorList>
    </citation>
    <scope>NUCLEOTIDE SEQUENCE [LARGE SCALE GENOMIC DNA]</scope>
    <source>
        <strain>Q1</strain>
    </source>
</reference>
<organism>
    <name type="scientific">Bacillus cereus (strain Q1)</name>
    <dbReference type="NCBI Taxonomy" id="361100"/>
    <lineage>
        <taxon>Bacteria</taxon>
        <taxon>Bacillati</taxon>
        <taxon>Bacillota</taxon>
        <taxon>Bacilli</taxon>
        <taxon>Bacillales</taxon>
        <taxon>Bacillaceae</taxon>
        <taxon>Bacillus</taxon>
        <taxon>Bacillus cereus group</taxon>
    </lineage>
</organism>
<feature type="chain" id="PRO_0000377074" description="tRNA dimethylallyltransferase">
    <location>
        <begin position="1"/>
        <end position="317"/>
    </location>
</feature>
<feature type="region of interest" description="Interaction with substrate tRNA" evidence="1">
    <location>
        <begin position="39"/>
        <end position="42"/>
    </location>
</feature>
<feature type="binding site" evidence="1">
    <location>
        <begin position="14"/>
        <end position="21"/>
    </location>
    <ligand>
        <name>ATP</name>
        <dbReference type="ChEBI" id="CHEBI:30616"/>
    </ligand>
</feature>
<feature type="binding site" evidence="1">
    <location>
        <begin position="16"/>
        <end position="21"/>
    </location>
    <ligand>
        <name>substrate</name>
    </ligand>
</feature>
<feature type="site" description="Interaction with substrate tRNA" evidence="1">
    <location>
        <position position="105"/>
    </location>
</feature>
<feature type="site" description="Interaction with substrate tRNA" evidence="1">
    <location>
        <position position="128"/>
    </location>
</feature>
<proteinExistence type="inferred from homology"/>